<protein>
    <recommendedName>
        <fullName evidence="1">Elongation factor P</fullName>
        <shortName evidence="1">EF-P</shortName>
    </recommendedName>
</protein>
<accession>A8H482</accession>
<comment type="function">
    <text evidence="1">Involved in peptide bond synthesis. Stimulates efficient translation and peptide-bond synthesis on native or reconstituted 70S ribosomes in vitro. Probably functions indirectly by altering the affinity of the ribosome for aminoacyl-tRNA, thus increasing their reactivity as acceptors for peptidyl transferase.</text>
</comment>
<comment type="pathway">
    <text evidence="1">Protein biosynthesis; polypeptide chain elongation.</text>
</comment>
<comment type="subcellular location">
    <subcellularLocation>
        <location evidence="1">Cytoplasm</location>
    </subcellularLocation>
</comment>
<comment type="similarity">
    <text evidence="1">Belongs to the elongation factor P family.</text>
</comment>
<feature type="chain" id="PRO_1000076534" description="Elongation factor P">
    <location>
        <begin position="1"/>
        <end position="186"/>
    </location>
</feature>
<dbReference type="EMBL" id="CP000851">
    <property type="protein sequence ID" value="ABV87369.1"/>
    <property type="molecule type" value="Genomic_DNA"/>
</dbReference>
<dbReference type="RefSeq" id="WP_012155285.1">
    <property type="nucleotide sequence ID" value="NC_009901.1"/>
</dbReference>
<dbReference type="SMR" id="A8H482"/>
<dbReference type="STRING" id="398579.Spea_2049"/>
<dbReference type="KEGG" id="spl:Spea_2049"/>
<dbReference type="eggNOG" id="COG0231">
    <property type="taxonomic scope" value="Bacteria"/>
</dbReference>
<dbReference type="HOGENOM" id="CLU_074944_2_1_6"/>
<dbReference type="OrthoDB" id="9801844at2"/>
<dbReference type="UniPathway" id="UPA00345"/>
<dbReference type="Proteomes" id="UP000002608">
    <property type="component" value="Chromosome"/>
</dbReference>
<dbReference type="GO" id="GO:0005737">
    <property type="term" value="C:cytoplasm"/>
    <property type="evidence" value="ECO:0007669"/>
    <property type="project" value="UniProtKB-SubCell"/>
</dbReference>
<dbReference type="GO" id="GO:0003746">
    <property type="term" value="F:translation elongation factor activity"/>
    <property type="evidence" value="ECO:0007669"/>
    <property type="project" value="UniProtKB-UniRule"/>
</dbReference>
<dbReference type="GO" id="GO:0043043">
    <property type="term" value="P:peptide biosynthetic process"/>
    <property type="evidence" value="ECO:0007669"/>
    <property type="project" value="InterPro"/>
</dbReference>
<dbReference type="CDD" id="cd04470">
    <property type="entry name" value="S1_EF-P_repeat_1"/>
    <property type="match status" value="1"/>
</dbReference>
<dbReference type="CDD" id="cd05794">
    <property type="entry name" value="S1_EF-P_repeat_2"/>
    <property type="match status" value="1"/>
</dbReference>
<dbReference type="FunFam" id="2.30.30.30:FF:000003">
    <property type="entry name" value="Elongation factor P"/>
    <property type="match status" value="1"/>
</dbReference>
<dbReference type="FunFam" id="2.40.50.140:FF:000004">
    <property type="entry name" value="Elongation factor P"/>
    <property type="match status" value="1"/>
</dbReference>
<dbReference type="FunFam" id="2.40.50.140:FF:000009">
    <property type="entry name" value="Elongation factor P"/>
    <property type="match status" value="1"/>
</dbReference>
<dbReference type="Gene3D" id="2.30.30.30">
    <property type="match status" value="1"/>
</dbReference>
<dbReference type="Gene3D" id="2.40.50.140">
    <property type="entry name" value="Nucleic acid-binding proteins"/>
    <property type="match status" value="2"/>
</dbReference>
<dbReference type="HAMAP" id="MF_00141">
    <property type="entry name" value="EF_P"/>
    <property type="match status" value="1"/>
</dbReference>
<dbReference type="InterPro" id="IPR015365">
    <property type="entry name" value="Elong-fact-P_C"/>
</dbReference>
<dbReference type="InterPro" id="IPR012340">
    <property type="entry name" value="NA-bd_OB-fold"/>
</dbReference>
<dbReference type="InterPro" id="IPR014722">
    <property type="entry name" value="Rib_uL2_dom2"/>
</dbReference>
<dbReference type="InterPro" id="IPR020599">
    <property type="entry name" value="Transl_elong_fac_P/YeiP"/>
</dbReference>
<dbReference type="InterPro" id="IPR013185">
    <property type="entry name" value="Transl_elong_KOW-like"/>
</dbReference>
<dbReference type="InterPro" id="IPR001059">
    <property type="entry name" value="Transl_elong_P/YeiP_cen"/>
</dbReference>
<dbReference type="InterPro" id="IPR011768">
    <property type="entry name" value="Transl_elongation_fac_P"/>
</dbReference>
<dbReference type="InterPro" id="IPR008991">
    <property type="entry name" value="Translation_prot_SH3-like_sf"/>
</dbReference>
<dbReference type="NCBIfam" id="TIGR00038">
    <property type="entry name" value="efp"/>
    <property type="match status" value="1"/>
</dbReference>
<dbReference type="NCBIfam" id="NF001810">
    <property type="entry name" value="PRK00529.1"/>
    <property type="match status" value="1"/>
</dbReference>
<dbReference type="PANTHER" id="PTHR30053">
    <property type="entry name" value="ELONGATION FACTOR P"/>
    <property type="match status" value="1"/>
</dbReference>
<dbReference type="PANTHER" id="PTHR30053:SF12">
    <property type="entry name" value="ELONGATION FACTOR P (EF-P) FAMILY PROTEIN"/>
    <property type="match status" value="1"/>
</dbReference>
<dbReference type="Pfam" id="PF01132">
    <property type="entry name" value="EFP"/>
    <property type="match status" value="1"/>
</dbReference>
<dbReference type="Pfam" id="PF08207">
    <property type="entry name" value="EFP_N"/>
    <property type="match status" value="1"/>
</dbReference>
<dbReference type="Pfam" id="PF09285">
    <property type="entry name" value="Elong-fact-P_C"/>
    <property type="match status" value="1"/>
</dbReference>
<dbReference type="PIRSF" id="PIRSF005901">
    <property type="entry name" value="EF-P"/>
    <property type="match status" value="1"/>
</dbReference>
<dbReference type="SMART" id="SM01185">
    <property type="entry name" value="EFP"/>
    <property type="match status" value="1"/>
</dbReference>
<dbReference type="SMART" id="SM00841">
    <property type="entry name" value="Elong-fact-P_C"/>
    <property type="match status" value="1"/>
</dbReference>
<dbReference type="SUPFAM" id="SSF50249">
    <property type="entry name" value="Nucleic acid-binding proteins"/>
    <property type="match status" value="2"/>
</dbReference>
<dbReference type="SUPFAM" id="SSF50104">
    <property type="entry name" value="Translation proteins SH3-like domain"/>
    <property type="match status" value="1"/>
</dbReference>
<organism>
    <name type="scientific">Shewanella pealeana (strain ATCC 700345 / ANG-SQ1)</name>
    <dbReference type="NCBI Taxonomy" id="398579"/>
    <lineage>
        <taxon>Bacteria</taxon>
        <taxon>Pseudomonadati</taxon>
        <taxon>Pseudomonadota</taxon>
        <taxon>Gammaproteobacteria</taxon>
        <taxon>Alteromonadales</taxon>
        <taxon>Shewanellaceae</taxon>
        <taxon>Shewanella</taxon>
    </lineage>
</organism>
<keyword id="KW-0963">Cytoplasm</keyword>
<keyword id="KW-0251">Elongation factor</keyword>
<keyword id="KW-0648">Protein biosynthesis</keyword>
<keyword id="KW-1185">Reference proteome</keyword>
<reference key="1">
    <citation type="submission" date="2007-10" db="EMBL/GenBank/DDBJ databases">
        <title>Complete sequence of Shewanella pealeana ATCC 700345.</title>
        <authorList>
            <consortium name="US DOE Joint Genome Institute"/>
            <person name="Copeland A."/>
            <person name="Lucas S."/>
            <person name="Lapidus A."/>
            <person name="Barry K."/>
            <person name="Glavina del Rio T."/>
            <person name="Dalin E."/>
            <person name="Tice H."/>
            <person name="Pitluck S."/>
            <person name="Chertkov O."/>
            <person name="Brettin T."/>
            <person name="Bruce D."/>
            <person name="Detter J.C."/>
            <person name="Han C."/>
            <person name="Schmutz J."/>
            <person name="Larimer F."/>
            <person name="Land M."/>
            <person name="Hauser L."/>
            <person name="Kyrpides N."/>
            <person name="Kim E."/>
            <person name="Zhao J.-S.Z."/>
            <person name="Manno D."/>
            <person name="Hawari J."/>
            <person name="Richardson P."/>
        </authorList>
    </citation>
    <scope>NUCLEOTIDE SEQUENCE [LARGE SCALE GENOMIC DNA]</scope>
    <source>
        <strain>ATCC 700345 / ANG-SQ1</strain>
    </source>
</reference>
<proteinExistence type="inferred from homology"/>
<name>EFP_SHEPA</name>
<gene>
    <name evidence="1" type="primary">efp</name>
    <name type="ordered locus">Spea_2049</name>
</gene>
<evidence type="ECO:0000255" key="1">
    <source>
        <dbReference type="HAMAP-Rule" id="MF_00141"/>
    </source>
</evidence>
<sequence>MKTAHELRPGNVIMLDGSPWVVQKTETTRSGRNAAIVKLKLKHVLQDSSTESTFKGEDKMEDIILERLDCTYSYFADPMYVFMDAEYNQYDVEAENLGDAAAYIVDGMEENCQVTFYEGKAISVELPTSVVREVTYTEPSARGDTSGKVMKPATITGGGTLSVADFVKTGDMIEIDTRTNEFKKRV</sequence>